<name>PCKG_MYCGI</name>
<keyword id="KW-0963">Cytoplasm</keyword>
<keyword id="KW-0210">Decarboxylase</keyword>
<keyword id="KW-0312">Gluconeogenesis</keyword>
<keyword id="KW-0342">GTP-binding</keyword>
<keyword id="KW-0456">Lyase</keyword>
<keyword id="KW-0464">Manganese</keyword>
<keyword id="KW-0479">Metal-binding</keyword>
<keyword id="KW-0547">Nucleotide-binding</keyword>
<organism>
    <name type="scientific">Mycolicibacterium gilvum (strain PYR-GCK)</name>
    <name type="common">Mycobacterium gilvum (strain PYR-GCK)</name>
    <dbReference type="NCBI Taxonomy" id="350054"/>
    <lineage>
        <taxon>Bacteria</taxon>
        <taxon>Bacillati</taxon>
        <taxon>Actinomycetota</taxon>
        <taxon>Actinomycetes</taxon>
        <taxon>Mycobacteriales</taxon>
        <taxon>Mycobacteriaceae</taxon>
        <taxon>Mycolicibacterium</taxon>
    </lineage>
</organism>
<reference key="1">
    <citation type="submission" date="2007-04" db="EMBL/GenBank/DDBJ databases">
        <title>Complete sequence of chromosome of Mycobacterium gilvum PYR-GCK.</title>
        <authorList>
            <consortium name="US DOE Joint Genome Institute"/>
            <person name="Copeland A."/>
            <person name="Lucas S."/>
            <person name="Lapidus A."/>
            <person name="Barry K."/>
            <person name="Detter J.C."/>
            <person name="Glavina del Rio T."/>
            <person name="Hammon N."/>
            <person name="Israni S."/>
            <person name="Dalin E."/>
            <person name="Tice H."/>
            <person name="Pitluck S."/>
            <person name="Chain P."/>
            <person name="Malfatti S."/>
            <person name="Shin M."/>
            <person name="Vergez L."/>
            <person name="Schmutz J."/>
            <person name="Larimer F."/>
            <person name="Land M."/>
            <person name="Hauser L."/>
            <person name="Kyrpides N."/>
            <person name="Mikhailova N."/>
            <person name="Miller C."/>
            <person name="Richardson P."/>
        </authorList>
    </citation>
    <scope>NUCLEOTIDE SEQUENCE [LARGE SCALE GENOMIC DNA]</scope>
    <source>
        <strain>PYR-GCK</strain>
    </source>
</reference>
<comment type="function">
    <text evidence="1">Catalyzes the conversion of oxaloacetate (OAA) to phosphoenolpyruvate (PEP), the rate-limiting step in the metabolic pathway that produces glucose from lactate and other precursors derived from the citric acid cycle.</text>
</comment>
<comment type="catalytic activity">
    <reaction evidence="1">
        <text>oxaloacetate + GTP = phosphoenolpyruvate + GDP + CO2</text>
        <dbReference type="Rhea" id="RHEA:10388"/>
        <dbReference type="ChEBI" id="CHEBI:16452"/>
        <dbReference type="ChEBI" id="CHEBI:16526"/>
        <dbReference type="ChEBI" id="CHEBI:37565"/>
        <dbReference type="ChEBI" id="CHEBI:58189"/>
        <dbReference type="ChEBI" id="CHEBI:58702"/>
        <dbReference type="EC" id="4.1.1.32"/>
    </reaction>
</comment>
<comment type="cofactor">
    <cofactor evidence="1">
        <name>Mn(2+)</name>
        <dbReference type="ChEBI" id="CHEBI:29035"/>
    </cofactor>
    <text evidence="1">Binds 1 Mn(2+) ion per subunit.</text>
</comment>
<comment type="pathway">
    <text evidence="1">Carbohydrate biosynthesis; gluconeogenesis.</text>
</comment>
<comment type="subunit">
    <text evidence="1">Monomer.</text>
</comment>
<comment type="subcellular location">
    <subcellularLocation>
        <location evidence="1">Cytoplasm</location>
    </subcellularLocation>
</comment>
<comment type="similarity">
    <text evidence="1">Belongs to the phosphoenolpyruvate carboxykinase [GTP] family.</text>
</comment>
<sequence length="609" mass="67486">MTAATIPGLDSAPTKHEGLLAWVREVAELTQPDRVAWADGSEEEYERLCAHLVEAGTFQKLNPDKQPNSYLALSDPSDVARVESRTYICSEREIDAGPTNNWMDPAEMRGIMTDLYRGSMRGRTLWVVPFCMGPLNAEDPKLGVELTDSEYVVVSMRTMTRMGAAALEKIGDDGFFVKALHSIGAPLEPGQADVPWPCNDTKYITHFPETREIWSYGSGYGGNALLGKKCYSLRIASAMAHDEGWLAEHMLILKLISPENKAYYIAAAFPSACGKTNLAMLQPTIPGWRAETVGDDIAWMRFGKDGRLYATNPEFGFFGVAPGTNWDSNPNAMKTIAAGNTVFTNVAKTDDGDVWWEGLEGEPDHLIDWKGNDWVLRETETKAAHPNSRYCTPISQCPTLAPEWDDPQGVPISAILFGGRRKTTVPLITEARDWQHGVFIGATLGSEQTAAAEGKVGTVRRDPMAMLPFLGYNVGDYFQHWINIGKQADESQLPKVFFVNWFRRGDDGRFLWPGFGENSRVLKWAVERIEHKADGKSTPIGIVPTAADLDLSGLDVNAADVDEALDVKVDEWRAELPLIEEWFEFVGEKLPTGIKDEFDALKTRLAEES</sequence>
<dbReference type="EC" id="4.1.1.32" evidence="1"/>
<dbReference type="EMBL" id="CP000656">
    <property type="protein sequence ID" value="ABP42945.1"/>
    <property type="molecule type" value="Genomic_DNA"/>
</dbReference>
<dbReference type="SMR" id="A4T3S1"/>
<dbReference type="STRING" id="350054.Mflv_0451"/>
<dbReference type="KEGG" id="mgi:Mflv_0451"/>
<dbReference type="eggNOG" id="COG1274">
    <property type="taxonomic scope" value="Bacteria"/>
</dbReference>
<dbReference type="HOGENOM" id="CLU_028872_1_1_11"/>
<dbReference type="OrthoDB" id="9758871at2"/>
<dbReference type="UniPathway" id="UPA00138"/>
<dbReference type="GO" id="GO:0005829">
    <property type="term" value="C:cytosol"/>
    <property type="evidence" value="ECO:0007669"/>
    <property type="project" value="TreeGrafter"/>
</dbReference>
<dbReference type="GO" id="GO:0005525">
    <property type="term" value="F:GTP binding"/>
    <property type="evidence" value="ECO:0007669"/>
    <property type="project" value="UniProtKB-UniRule"/>
</dbReference>
<dbReference type="GO" id="GO:0030145">
    <property type="term" value="F:manganese ion binding"/>
    <property type="evidence" value="ECO:0007669"/>
    <property type="project" value="UniProtKB-UniRule"/>
</dbReference>
<dbReference type="GO" id="GO:0004613">
    <property type="term" value="F:phosphoenolpyruvate carboxykinase (GTP) activity"/>
    <property type="evidence" value="ECO:0007669"/>
    <property type="project" value="UniProtKB-UniRule"/>
</dbReference>
<dbReference type="GO" id="GO:0071333">
    <property type="term" value="P:cellular response to glucose stimulus"/>
    <property type="evidence" value="ECO:0007669"/>
    <property type="project" value="TreeGrafter"/>
</dbReference>
<dbReference type="GO" id="GO:0006094">
    <property type="term" value="P:gluconeogenesis"/>
    <property type="evidence" value="ECO:0007669"/>
    <property type="project" value="UniProtKB-UniRule"/>
</dbReference>
<dbReference type="GO" id="GO:0046327">
    <property type="term" value="P:glycerol biosynthetic process from pyruvate"/>
    <property type="evidence" value="ECO:0007669"/>
    <property type="project" value="TreeGrafter"/>
</dbReference>
<dbReference type="GO" id="GO:0006107">
    <property type="term" value="P:oxaloacetate metabolic process"/>
    <property type="evidence" value="ECO:0007669"/>
    <property type="project" value="TreeGrafter"/>
</dbReference>
<dbReference type="GO" id="GO:0019543">
    <property type="term" value="P:propionate catabolic process"/>
    <property type="evidence" value="ECO:0007669"/>
    <property type="project" value="TreeGrafter"/>
</dbReference>
<dbReference type="GO" id="GO:0033993">
    <property type="term" value="P:response to lipid"/>
    <property type="evidence" value="ECO:0007669"/>
    <property type="project" value="TreeGrafter"/>
</dbReference>
<dbReference type="GO" id="GO:0042594">
    <property type="term" value="P:response to starvation"/>
    <property type="evidence" value="ECO:0007669"/>
    <property type="project" value="TreeGrafter"/>
</dbReference>
<dbReference type="CDD" id="cd00819">
    <property type="entry name" value="PEPCK_GTP"/>
    <property type="match status" value="1"/>
</dbReference>
<dbReference type="FunFam" id="3.40.449.10:FF:000005">
    <property type="entry name" value="Phosphoenolpyruvate carboxykinase [GTP]"/>
    <property type="match status" value="1"/>
</dbReference>
<dbReference type="Gene3D" id="3.90.228.20">
    <property type="match status" value="1"/>
</dbReference>
<dbReference type="Gene3D" id="3.40.449.10">
    <property type="entry name" value="Phosphoenolpyruvate Carboxykinase, domain 1"/>
    <property type="match status" value="1"/>
</dbReference>
<dbReference type="Gene3D" id="2.170.8.10">
    <property type="entry name" value="Phosphoenolpyruvate Carboxykinase, domain 2"/>
    <property type="match status" value="1"/>
</dbReference>
<dbReference type="HAMAP" id="MF_00452">
    <property type="entry name" value="PEPCK_GTP"/>
    <property type="match status" value="1"/>
</dbReference>
<dbReference type="InterPro" id="IPR018091">
    <property type="entry name" value="PEP_carboxykin_GTP_CS"/>
</dbReference>
<dbReference type="InterPro" id="IPR013035">
    <property type="entry name" value="PEP_carboxykinase_C"/>
</dbReference>
<dbReference type="InterPro" id="IPR008209">
    <property type="entry name" value="PEP_carboxykinase_GTP"/>
</dbReference>
<dbReference type="InterPro" id="IPR035077">
    <property type="entry name" value="PEP_carboxykinase_GTP_C"/>
</dbReference>
<dbReference type="InterPro" id="IPR035078">
    <property type="entry name" value="PEP_carboxykinase_GTP_N"/>
</dbReference>
<dbReference type="InterPro" id="IPR008210">
    <property type="entry name" value="PEP_carboxykinase_N"/>
</dbReference>
<dbReference type="NCBIfam" id="NF003253">
    <property type="entry name" value="PRK04210.1"/>
    <property type="match status" value="1"/>
</dbReference>
<dbReference type="PANTHER" id="PTHR11561">
    <property type="entry name" value="PHOSPHOENOLPYRUVATE CARBOXYKINASE"/>
    <property type="match status" value="1"/>
</dbReference>
<dbReference type="PANTHER" id="PTHR11561:SF0">
    <property type="entry name" value="PHOSPHOENOLPYRUVATE CARBOXYKINASE [GTP]-RELATED"/>
    <property type="match status" value="1"/>
</dbReference>
<dbReference type="Pfam" id="PF00821">
    <property type="entry name" value="PEPCK_GTP"/>
    <property type="match status" value="1"/>
</dbReference>
<dbReference type="Pfam" id="PF17297">
    <property type="entry name" value="PEPCK_N"/>
    <property type="match status" value="1"/>
</dbReference>
<dbReference type="PIRSF" id="PIRSF001348">
    <property type="entry name" value="PEP_carboxykinase_GTP"/>
    <property type="match status" value="1"/>
</dbReference>
<dbReference type="SUPFAM" id="SSF68923">
    <property type="entry name" value="PEP carboxykinase N-terminal domain"/>
    <property type="match status" value="1"/>
</dbReference>
<dbReference type="SUPFAM" id="SSF53795">
    <property type="entry name" value="PEP carboxykinase-like"/>
    <property type="match status" value="1"/>
</dbReference>
<dbReference type="PROSITE" id="PS00505">
    <property type="entry name" value="PEPCK_GTP"/>
    <property type="match status" value="1"/>
</dbReference>
<accession>A4T3S1</accession>
<proteinExistence type="inferred from homology"/>
<evidence type="ECO:0000255" key="1">
    <source>
        <dbReference type="HAMAP-Rule" id="MF_00452"/>
    </source>
</evidence>
<gene>
    <name evidence="1" type="primary">pckG</name>
    <name type="ordered locus">Mflv_0451</name>
</gene>
<feature type="chain" id="PRO_1000080986" description="Phosphoenolpyruvate carboxykinase [GTP]">
    <location>
        <begin position="1"/>
        <end position="609"/>
    </location>
</feature>
<feature type="active site" evidence="1">
    <location>
        <position position="273"/>
    </location>
</feature>
<feature type="binding site" evidence="1">
    <location>
        <position position="81"/>
    </location>
    <ligand>
        <name>substrate</name>
    </ligand>
</feature>
<feature type="binding site" evidence="1">
    <location>
        <begin position="220"/>
        <end position="222"/>
    </location>
    <ligand>
        <name>substrate</name>
    </ligand>
</feature>
<feature type="binding site" evidence="1">
    <location>
        <position position="229"/>
    </location>
    <ligand>
        <name>Mn(2+)</name>
        <dbReference type="ChEBI" id="CHEBI:29035"/>
    </ligand>
</feature>
<feature type="binding site" evidence="1">
    <location>
        <position position="249"/>
    </location>
    <ligand>
        <name>Mn(2+)</name>
        <dbReference type="ChEBI" id="CHEBI:29035"/>
    </ligand>
</feature>
<feature type="binding site" evidence="1">
    <location>
        <position position="271"/>
    </location>
    <ligand>
        <name>substrate</name>
    </ligand>
</feature>
<feature type="binding site" evidence="1">
    <location>
        <begin position="272"/>
        <end position="277"/>
    </location>
    <ligand>
        <name>GTP</name>
        <dbReference type="ChEBI" id="CHEBI:37565"/>
    </ligand>
</feature>
<feature type="binding site" evidence="1">
    <location>
        <position position="296"/>
    </location>
    <ligand>
        <name>Mn(2+)</name>
        <dbReference type="ChEBI" id="CHEBI:29035"/>
    </ligand>
</feature>
<feature type="binding site" evidence="1">
    <location>
        <begin position="387"/>
        <end position="389"/>
    </location>
    <ligand>
        <name>substrate</name>
    </ligand>
</feature>
<feature type="binding site" evidence="1">
    <location>
        <position position="389"/>
    </location>
    <ligand>
        <name>GTP</name>
        <dbReference type="ChEBI" id="CHEBI:37565"/>
    </ligand>
</feature>
<feature type="binding site" evidence="1">
    <location>
        <position position="420"/>
    </location>
    <ligand>
        <name>GTP</name>
        <dbReference type="ChEBI" id="CHEBI:37565"/>
    </ligand>
</feature>
<feature type="binding site" evidence="1">
    <location>
        <begin position="515"/>
        <end position="518"/>
    </location>
    <ligand>
        <name>GTP</name>
        <dbReference type="ChEBI" id="CHEBI:37565"/>
    </ligand>
</feature>
<protein>
    <recommendedName>
        <fullName evidence="1">Phosphoenolpyruvate carboxykinase [GTP]</fullName>
        <shortName evidence="1">PEP carboxykinase</shortName>
        <shortName evidence="1">PEPCK</shortName>
        <ecNumber evidence="1">4.1.1.32</ecNumber>
    </recommendedName>
</protein>